<gene>
    <name type="primary">M</name>
</gene>
<accession>A4UHQ5</accession>
<comment type="function">
    <text evidence="1">Plays a major role in assembly and budding of virion. Completely covers the ribonucleoprotein coil and keep it in condensed bullet-shaped form. Inhibits viral transcription and stimulates replication. Plays a major role in early induction of TRAIL-mediated apoptosis in infected neurons (By similarity).</text>
</comment>
<comment type="subunit">
    <text evidence="1">Homomultimer. Interacts with nucleoprotein and with the cytoplasmic domain of glycoprotein (By similarity).</text>
</comment>
<comment type="subcellular location">
    <subcellularLocation>
        <location>Virion membrane</location>
        <topology>Peripheral membrane protein</topology>
    </subcellularLocation>
    <subcellularLocation>
        <location evidence="1">Host endomembrane system</location>
        <topology evidence="1">Peripheral membrane protein</topology>
    </subcellularLocation>
</comment>
<comment type="domain">
    <text evidence="3">Late-budding domains (L domains) are short sequence motifs essential for viral particle budding. They recruit proteins of the host ESCRT machinery (Endosomal Sorting Complex Required for Transport) or ESCRT-associated proteins. Matrix protein contains one L domain: a PPXY motif which potentially interacts with the WW domain 3 of NEDD4 E3 ubiquitin ligase (Potential).</text>
</comment>
<comment type="miscellaneous">
    <text evidence="1">Most abundant protein in the virion.</text>
</comment>
<comment type="similarity">
    <text evidence="3">Belongs to the lyssavirus matrix protein family.</text>
</comment>
<sequence>MNFLRKIVRGCRDEEDQKPALVSAPPDDDDLWLPPPEYVPLTEITGRKNMRNFCVNGEVKVCSPNGYSFKILRHILRSFDGVYSGNQRMRGLVKVVIGLALSGGPIPEGMNWVYKVRRTLVFQWAESRGPLDGEELEYSQEITWDDDSEFVGSQIRVSARQCHIQGRIWCINMNSRACQLWSDMALKTQQSDEDRNTSLLLE</sequence>
<organismHost>
    <name type="scientific">Mammalia</name>
    <dbReference type="NCBI Taxonomy" id="40674"/>
</organismHost>
<organism>
    <name type="scientific">European bat lyssavirus 2 (strain Human/Scotland/RV1333/2002)</name>
    <name type="common">EBLV2</name>
    <dbReference type="NCBI Taxonomy" id="453116"/>
    <lineage>
        <taxon>Viruses</taxon>
        <taxon>Riboviria</taxon>
        <taxon>Orthornavirae</taxon>
        <taxon>Negarnaviricota</taxon>
        <taxon>Haploviricotina</taxon>
        <taxon>Monjiviricetes</taxon>
        <taxon>Mononegavirales</taxon>
        <taxon>Rhabdoviridae</taxon>
        <taxon>Alpharhabdovirinae</taxon>
        <taxon>Lyssavirus</taxon>
        <taxon>Lyssavirus hamburg</taxon>
    </lineage>
</organism>
<keyword id="KW-0053">Apoptosis</keyword>
<keyword id="KW-1043">Host membrane</keyword>
<keyword id="KW-0945">Host-virus interaction</keyword>
<keyword id="KW-0472">Membrane</keyword>
<keyword id="KW-1185">Reference proteome</keyword>
<keyword id="KW-1198">Viral budding</keyword>
<keyword id="KW-1187">Viral budding via the host ESCRT complexes</keyword>
<keyword id="KW-0261">Viral envelope protein</keyword>
<keyword id="KW-0468">Viral matrix protein</keyword>
<keyword id="KW-1188">Viral release from host cell</keyword>
<keyword id="KW-0946">Virion</keyword>
<dbReference type="EMBL" id="EF157977">
    <property type="protein sequence ID" value="ABO65250.1"/>
    <property type="molecule type" value="Genomic_RNA"/>
</dbReference>
<dbReference type="RefSeq" id="YP_001285395.1">
    <property type="nucleotide sequence ID" value="NC_009528.2"/>
</dbReference>
<dbReference type="SMR" id="A4UHQ5"/>
<dbReference type="GeneID" id="5219915"/>
<dbReference type="KEGG" id="vg:5219915"/>
<dbReference type="Proteomes" id="UP000007206">
    <property type="component" value="Segment"/>
</dbReference>
<dbReference type="GO" id="GO:0033645">
    <property type="term" value="C:host cell endomembrane system"/>
    <property type="evidence" value="ECO:0007669"/>
    <property type="project" value="UniProtKB-SubCell"/>
</dbReference>
<dbReference type="GO" id="GO:0016020">
    <property type="term" value="C:membrane"/>
    <property type="evidence" value="ECO:0007669"/>
    <property type="project" value="UniProtKB-KW"/>
</dbReference>
<dbReference type="GO" id="GO:0019031">
    <property type="term" value="C:viral envelope"/>
    <property type="evidence" value="ECO:0007669"/>
    <property type="project" value="UniProtKB-KW"/>
</dbReference>
<dbReference type="GO" id="GO:0055036">
    <property type="term" value="C:virion membrane"/>
    <property type="evidence" value="ECO:0007669"/>
    <property type="project" value="UniProtKB-SubCell"/>
</dbReference>
<dbReference type="GO" id="GO:0039660">
    <property type="term" value="F:structural constituent of virion"/>
    <property type="evidence" value="ECO:0007669"/>
    <property type="project" value="UniProtKB-KW"/>
</dbReference>
<dbReference type="GO" id="GO:0039702">
    <property type="term" value="P:viral budding via host ESCRT complex"/>
    <property type="evidence" value="ECO:0007669"/>
    <property type="project" value="UniProtKB-KW"/>
</dbReference>
<dbReference type="Gene3D" id="3.10.460.20">
    <property type="entry name" value="Rhabdovirus matrix protein M2"/>
    <property type="match status" value="1"/>
</dbReference>
<dbReference type="InterPro" id="IPR006870">
    <property type="entry name" value="Rhabdo_M"/>
</dbReference>
<dbReference type="InterPro" id="IPR038617">
    <property type="entry name" value="Rhabdovirus_M_sf"/>
</dbReference>
<dbReference type="Pfam" id="PF04785">
    <property type="entry name" value="Rhabdo_M2"/>
    <property type="match status" value="1"/>
</dbReference>
<feature type="chain" id="PRO_0000299103" description="Matrix protein">
    <location>
        <begin position="1"/>
        <end position="202"/>
    </location>
</feature>
<feature type="short sequence motif" description="PPXY motif" evidence="2">
    <location>
        <begin position="35"/>
        <end position="38"/>
    </location>
</feature>
<name>MATRX_EBLV2</name>
<proteinExistence type="inferred from homology"/>
<protein>
    <recommendedName>
        <fullName>Matrix protein</fullName>
    </recommendedName>
</protein>
<reference key="1">
    <citation type="journal article" date="2007" name="J. Gen. Virol.">
        <title>Comparative analysis of the full genome sequence of European bat lyssavirus type 1 and type 2 with other lyssaviruses and evidence for a conserved transcription termination and polyadenylation motif in the G-L 3' non-translated region.</title>
        <authorList>
            <person name="Marston D.A."/>
            <person name="McElhinney L.M."/>
            <person name="Johnson N."/>
            <person name="Muller T."/>
            <person name="Conzelmann K.K."/>
            <person name="Tordo N."/>
            <person name="Fooks A.R."/>
        </authorList>
    </citation>
    <scope>NUCLEOTIDE SEQUENCE [GENOMIC RNA]</scope>
</reference>
<evidence type="ECO:0000250" key="1"/>
<evidence type="ECO:0000255" key="2"/>
<evidence type="ECO:0000305" key="3"/>